<feature type="chain" id="PRO_0000091981" description="Energy-coupling factor transporter ATP-binding protein EcfA2">
    <location>
        <begin position="1"/>
        <end position="282"/>
    </location>
</feature>
<feature type="domain" description="ABC transporter" evidence="1">
    <location>
        <begin position="1"/>
        <end position="234"/>
    </location>
</feature>
<feature type="binding site" evidence="1">
    <location>
        <begin position="28"/>
        <end position="35"/>
    </location>
    <ligand>
        <name>ATP</name>
        <dbReference type="ChEBI" id="CHEBI:30616"/>
    </ligand>
</feature>
<evidence type="ECO:0000255" key="1">
    <source>
        <dbReference type="HAMAP-Rule" id="MF_01710"/>
    </source>
</evidence>
<evidence type="ECO:0000305" key="2"/>
<name>ECFA2_HALH5</name>
<accession>Q9KGD6</accession>
<accession>Q9Z9J2</accession>
<keyword id="KW-0067">ATP-binding</keyword>
<keyword id="KW-1003">Cell membrane</keyword>
<keyword id="KW-0472">Membrane</keyword>
<keyword id="KW-0547">Nucleotide-binding</keyword>
<keyword id="KW-1185">Reference proteome</keyword>
<keyword id="KW-1278">Translocase</keyword>
<keyword id="KW-0813">Transport</keyword>
<organism>
    <name type="scientific">Halalkalibacterium halodurans (strain ATCC BAA-125 / DSM 18197 / FERM 7344 / JCM 9153 / C-125)</name>
    <name type="common">Bacillus halodurans</name>
    <dbReference type="NCBI Taxonomy" id="272558"/>
    <lineage>
        <taxon>Bacteria</taxon>
        <taxon>Bacillati</taxon>
        <taxon>Bacillota</taxon>
        <taxon>Bacilli</taxon>
        <taxon>Bacillales</taxon>
        <taxon>Bacillaceae</taxon>
        <taxon>Halalkalibacterium (ex Joshi et al. 2022)</taxon>
    </lineage>
</organism>
<proteinExistence type="inferred from homology"/>
<dbReference type="EC" id="7.-.-.-" evidence="1"/>
<dbReference type="EMBL" id="AB017508">
    <property type="protein sequence ID" value="BAA75301.1"/>
    <property type="status" value="ALT_INIT"/>
    <property type="molecule type" value="Genomic_DNA"/>
</dbReference>
<dbReference type="EMBL" id="BA000004">
    <property type="protein sequence ID" value="BAB03884.1"/>
    <property type="molecule type" value="Genomic_DNA"/>
</dbReference>
<dbReference type="PIR" id="E83670">
    <property type="entry name" value="E83670"/>
</dbReference>
<dbReference type="PIR" id="T44413">
    <property type="entry name" value="T44413"/>
</dbReference>
<dbReference type="SMR" id="Q9KGD6"/>
<dbReference type="STRING" id="272558.gene:10726005"/>
<dbReference type="KEGG" id="bha:BH0165"/>
<dbReference type="eggNOG" id="COG1122">
    <property type="taxonomic scope" value="Bacteria"/>
</dbReference>
<dbReference type="HOGENOM" id="CLU_000604_1_22_9"/>
<dbReference type="Proteomes" id="UP000001258">
    <property type="component" value="Chromosome"/>
</dbReference>
<dbReference type="GO" id="GO:0043190">
    <property type="term" value="C:ATP-binding cassette (ABC) transporter complex"/>
    <property type="evidence" value="ECO:0007669"/>
    <property type="project" value="TreeGrafter"/>
</dbReference>
<dbReference type="GO" id="GO:0005524">
    <property type="term" value="F:ATP binding"/>
    <property type="evidence" value="ECO:0007669"/>
    <property type="project" value="UniProtKB-KW"/>
</dbReference>
<dbReference type="GO" id="GO:0016887">
    <property type="term" value="F:ATP hydrolysis activity"/>
    <property type="evidence" value="ECO:0007669"/>
    <property type="project" value="InterPro"/>
</dbReference>
<dbReference type="GO" id="GO:0042626">
    <property type="term" value="F:ATPase-coupled transmembrane transporter activity"/>
    <property type="evidence" value="ECO:0007669"/>
    <property type="project" value="TreeGrafter"/>
</dbReference>
<dbReference type="CDD" id="cd03225">
    <property type="entry name" value="ABC_cobalt_CbiO_domain1"/>
    <property type="match status" value="1"/>
</dbReference>
<dbReference type="FunFam" id="3.40.50.300:FF:000224">
    <property type="entry name" value="Energy-coupling factor transporter ATP-binding protein EcfA"/>
    <property type="match status" value="1"/>
</dbReference>
<dbReference type="Gene3D" id="3.40.50.300">
    <property type="entry name" value="P-loop containing nucleotide triphosphate hydrolases"/>
    <property type="match status" value="1"/>
</dbReference>
<dbReference type="InterPro" id="IPR003593">
    <property type="entry name" value="AAA+_ATPase"/>
</dbReference>
<dbReference type="InterPro" id="IPR003439">
    <property type="entry name" value="ABC_transporter-like_ATP-bd"/>
</dbReference>
<dbReference type="InterPro" id="IPR017871">
    <property type="entry name" value="ABC_transporter-like_CS"/>
</dbReference>
<dbReference type="InterPro" id="IPR015856">
    <property type="entry name" value="ABC_transpr_CbiO/EcfA_su"/>
</dbReference>
<dbReference type="InterPro" id="IPR050095">
    <property type="entry name" value="ECF_ABC_transporter_ATP-bd"/>
</dbReference>
<dbReference type="InterPro" id="IPR030946">
    <property type="entry name" value="EcfA2"/>
</dbReference>
<dbReference type="InterPro" id="IPR027417">
    <property type="entry name" value="P-loop_NTPase"/>
</dbReference>
<dbReference type="NCBIfam" id="TIGR04521">
    <property type="entry name" value="ECF_ATPase_2"/>
    <property type="match status" value="1"/>
</dbReference>
<dbReference type="NCBIfam" id="NF010155">
    <property type="entry name" value="PRK13634.1"/>
    <property type="match status" value="1"/>
</dbReference>
<dbReference type="PANTHER" id="PTHR43553:SF27">
    <property type="entry name" value="ENERGY-COUPLING FACTOR TRANSPORTER ATP-BINDING PROTEIN ECFA2"/>
    <property type="match status" value="1"/>
</dbReference>
<dbReference type="PANTHER" id="PTHR43553">
    <property type="entry name" value="HEAVY METAL TRANSPORTER"/>
    <property type="match status" value="1"/>
</dbReference>
<dbReference type="Pfam" id="PF00005">
    <property type="entry name" value="ABC_tran"/>
    <property type="match status" value="1"/>
</dbReference>
<dbReference type="SMART" id="SM00382">
    <property type="entry name" value="AAA"/>
    <property type="match status" value="1"/>
</dbReference>
<dbReference type="SUPFAM" id="SSF52540">
    <property type="entry name" value="P-loop containing nucleoside triphosphate hydrolases"/>
    <property type="match status" value="1"/>
</dbReference>
<dbReference type="PROSITE" id="PS00211">
    <property type="entry name" value="ABC_TRANSPORTER_1"/>
    <property type="match status" value="1"/>
</dbReference>
<dbReference type="PROSITE" id="PS50893">
    <property type="entry name" value="ABC_TRANSPORTER_2"/>
    <property type="match status" value="1"/>
</dbReference>
<dbReference type="PROSITE" id="PS51246">
    <property type="entry name" value="CBIO"/>
    <property type="match status" value="1"/>
</dbReference>
<comment type="function">
    <text evidence="1">ATP-binding (A) component of a common energy-coupling factor (ECF) ABC-transporter complex. Unlike classic ABC transporters this ECF transporter provides the energy necessary to transport a number of different substrates.</text>
</comment>
<comment type="subunit">
    <text evidence="1">Forms a stable energy-coupling factor (ECF) transporter complex composed of 2 membrane-embedded substrate-binding proteins (S component), 2 ATP-binding proteins (A component) and 2 transmembrane proteins (T component).</text>
</comment>
<comment type="subcellular location">
    <subcellularLocation>
        <location evidence="1">Cell membrane</location>
        <topology evidence="1">Peripheral membrane protein</topology>
    </subcellularLocation>
</comment>
<comment type="similarity">
    <text evidence="1">Belongs to the ABC transporter superfamily. Energy-coupling factor EcfA family.</text>
</comment>
<comment type="sequence caution" evidence="2">
    <conflict type="erroneous initiation">
        <sequence resource="EMBL-CDS" id="BAA75301"/>
    </conflict>
    <text>Truncated N-terminus.</text>
</comment>
<gene>
    <name evidence="1" type="primary">ecfA2</name>
    <name type="synonym">cbiO2</name>
    <name type="ordered locus">BH0165</name>
</gene>
<protein>
    <recommendedName>
        <fullName evidence="1">Energy-coupling factor transporter ATP-binding protein EcfA2</fullName>
        <shortName evidence="1">ECF transporter A component EcfA2</shortName>
        <ecNumber evidence="1">7.-.-.-</ecNumber>
    </recommendedName>
</protein>
<reference key="1">
    <citation type="journal article" date="1999" name="Biosci. Biotechnol. Biochem.">
        <title>Sequence analysis of a 32-kb region including the major ribosomal protein gene clusters from alkaliphilic Bacillus sp. strain C-125.</title>
        <authorList>
            <person name="Takami H."/>
            <person name="Takaki Y."/>
            <person name="Nakasone K."/>
            <person name="Hirama C."/>
            <person name="Inoue A."/>
            <person name="Horikoshi K."/>
        </authorList>
    </citation>
    <scope>NUCLEOTIDE SEQUENCE [GENOMIC DNA]</scope>
    <source>
        <strain>ATCC BAA-125 / DSM 18197 / FERM 7344 / JCM 9153 / C-125</strain>
    </source>
</reference>
<reference key="2">
    <citation type="journal article" date="2000" name="Nucleic Acids Res.">
        <title>Complete genome sequence of the alkaliphilic bacterium Bacillus halodurans and genomic sequence comparison with Bacillus subtilis.</title>
        <authorList>
            <person name="Takami H."/>
            <person name="Nakasone K."/>
            <person name="Takaki Y."/>
            <person name="Maeno G."/>
            <person name="Sasaki R."/>
            <person name="Masui N."/>
            <person name="Fuji F."/>
            <person name="Hirama C."/>
            <person name="Nakamura Y."/>
            <person name="Ogasawara N."/>
            <person name="Kuhara S."/>
            <person name="Horikoshi K."/>
        </authorList>
    </citation>
    <scope>NUCLEOTIDE SEQUENCE [LARGE SCALE GENOMIC DNA]</scope>
    <source>
        <strain>ATCC BAA-125 / DSM 18197 / FERM 7344 / JCM 9153 / C-125</strain>
    </source>
</reference>
<sequence length="282" mass="31060">MKGSPFEKVALSDVSFTIPSGSFTAIIGHTGSGKSTLAQHFNGLLRPSKGTVRLGELEITADQKPPSLKEIRRKVGLVFQYPEHQLFEETVEKDICFGPMNYGVSEARAKKRAKELLHLVGLPDTYLQASPFSLSGGQMRRVAIAGVLAMEPDVLVLDEPTAGLDPEGQRLIMDMFYRLHQEKELTTVLVTHNMSDAAKFADQIIVMSQGNVAMTGDRQTVFARADELVALGLDVPETLQLLLQVKERFGLHDVPPLFSLEELADFLAKELQQKEGQPCSKI</sequence>